<proteinExistence type="inferred from homology"/>
<name>ENV_FIVU2</name>
<comment type="function">
    <text evidence="1">The surface protein (SU) attaches the virus to the host cell by binding to its receptor. This interaction triggers the refolding of the transmembrane protein (TM) and is thought to activate its fusogenic potential by unmasking its fusion peptide. Fusion occurs at the host cell plasma membrane (By similarity).</text>
</comment>
<comment type="function">
    <text evidence="1">The transmembrane protein (TM) acts as a class I viral fusion protein. Under the current model, the protein has at least 3 conformational states: pre-fusion native state, pre-hairpin intermediate state, and post-fusion hairpin state. During viral and target cell membrane fusion, the coiled coil regions (heptad repeats) assume a trimer-of-hairpins structure, positioning the fusion peptide in close proximity to the C-terminal region of the ectodomain. The formation of this structure appears to drive apposition and subsequent fusion of viral and target cell membranes. Membranes fusion leads to delivery of the nucleocapsid into the cytoplasm (By similarity).</text>
</comment>
<comment type="subunit">
    <text evidence="1">The mature envelope protein (Env) consists of a trimer of SU-TM heterodimers attached by noncovalent interactions or by a labile interchain disulfide bond.</text>
</comment>
<comment type="subcellular location">
    <molecule>Transmembrane protein</molecule>
    <subcellularLocation>
        <location evidence="1">Virion membrane</location>
        <topology evidence="1">Single-pass type I membrane protein</topology>
    </subcellularLocation>
    <subcellularLocation>
        <location evidence="1">Host cell membrane</location>
        <topology evidence="1">Single-pass type I membrane protein</topology>
    </subcellularLocation>
    <text evidence="1">It is probably concentrated at the site of budding and incorporated into the virions possibly by contacts between the cytoplasmic tail of Env and the N-terminus of Gag.</text>
</comment>
<comment type="subcellular location">
    <molecule>Surface protein</molecule>
    <subcellularLocation>
        <location evidence="1">Virion membrane</location>
        <topology evidence="1">Peripheral membrane protein</topology>
    </subcellularLocation>
    <subcellularLocation>
        <location evidence="1">Host cell membrane</location>
        <topology evidence="1">Peripheral membrane protein</topology>
    </subcellularLocation>
    <text evidence="1">The surface protein is not anchored to the viral envelope, but associates with the extravirion surface through its binding to TM. It is probably concentrated at the site of budding and incorporated into the virions possibly by contacts between the cytoplasmic tail of Env and the N-terminus of Gag (By similarity).</text>
</comment>
<comment type="PTM">
    <text evidence="1">Specific enzymatic cleavages in vivo yield mature proteins. Envelope glycoproteins are synthesized as an inactive precursor that is N-glycosylated and processed likely by host cell furin or by a furin-like protease in the Golgi to yield the mature SU and TM proteins. The cleavage site between SU and TM requires the minimal sequence [KR]-X-[KR]-R (By similarity).</text>
</comment>
<dbReference type="EMBL" id="X69494">
    <property type="protein sequence ID" value="CAA49248.1"/>
    <property type="molecule type" value="Genomic_DNA"/>
</dbReference>
<dbReference type="PIR" id="JQ2003">
    <property type="entry name" value="JQ2003"/>
</dbReference>
<dbReference type="GlyCosmos" id="Q04993">
    <property type="glycosylation" value="20 sites, No reported glycans"/>
</dbReference>
<dbReference type="GO" id="GO:0020002">
    <property type="term" value="C:host cell plasma membrane"/>
    <property type="evidence" value="ECO:0007669"/>
    <property type="project" value="UniProtKB-SubCell"/>
</dbReference>
<dbReference type="GO" id="GO:0016020">
    <property type="term" value="C:membrane"/>
    <property type="evidence" value="ECO:0007669"/>
    <property type="project" value="UniProtKB-KW"/>
</dbReference>
<dbReference type="GO" id="GO:0019031">
    <property type="term" value="C:viral envelope"/>
    <property type="evidence" value="ECO:0007669"/>
    <property type="project" value="UniProtKB-KW"/>
</dbReference>
<dbReference type="GO" id="GO:0055036">
    <property type="term" value="C:virion membrane"/>
    <property type="evidence" value="ECO:0007669"/>
    <property type="project" value="UniProtKB-SubCell"/>
</dbReference>
<dbReference type="GO" id="GO:0005198">
    <property type="term" value="F:structural molecule activity"/>
    <property type="evidence" value="ECO:0007669"/>
    <property type="project" value="InterPro"/>
</dbReference>
<dbReference type="GO" id="GO:0046718">
    <property type="term" value="P:symbiont entry into host cell"/>
    <property type="evidence" value="ECO:0007669"/>
    <property type="project" value="UniProtKB-KW"/>
</dbReference>
<dbReference type="GO" id="GO:0019062">
    <property type="term" value="P:virion attachment to host cell"/>
    <property type="evidence" value="ECO:0007669"/>
    <property type="project" value="UniProtKB-KW"/>
</dbReference>
<dbReference type="CDD" id="cd09909">
    <property type="entry name" value="HIV-1-like_HR1-HR2"/>
    <property type="match status" value="1"/>
</dbReference>
<dbReference type="InterPro" id="IPR018582">
    <property type="entry name" value="Envelope_glycop_lentivirus"/>
</dbReference>
<dbReference type="InterPro" id="IPR000328">
    <property type="entry name" value="GP41-like"/>
</dbReference>
<dbReference type="Pfam" id="PF09590">
    <property type="entry name" value="Env-gp36"/>
    <property type="match status" value="1"/>
</dbReference>
<reference key="1">
    <citation type="journal article" date="1993" name="J. Gen. Virol.">
        <title>Evolution of structural proteins of feline immunodeficiency virus: molecular epidemiology and evidence of selection for change.</title>
        <authorList>
            <person name="Rigby M.A."/>
            <person name="Holmes E.C."/>
            <person name="Pistello M."/>
            <person name="Mackay A."/>
            <person name="Brown A.J.L."/>
            <person name="Neil J.C."/>
        </authorList>
    </citation>
    <scope>NUCLEOTIDE SEQUENCE [GENOMIC DNA]</scope>
</reference>
<gene>
    <name type="primary">env</name>
</gene>
<organism>
    <name type="scientific">Feline immunodeficiency virus (strain UK2)</name>
    <name type="common">FIV</name>
    <dbReference type="NCBI Taxonomy" id="36371"/>
    <lineage>
        <taxon>Viruses</taxon>
        <taxon>Riboviria</taxon>
        <taxon>Pararnavirae</taxon>
        <taxon>Artverviricota</taxon>
        <taxon>Revtraviricetes</taxon>
        <taxon>Ortervirales</taxon>
        <taxon>Retroviridae</taxon>
        <taxon>Orthoretrovirinae</taxon>
        <taxon>Lentivirus</taxon>
        <taxon>Feline immunodeficiency virus</taxon>
    </lineage>
</organism>
<sequence length="855" mass="98374">MAEGFAVNRQWIGPEEAEELLDFDIATQMNEEGPLNPGINLFRVPGITETEKQEYCNILQPKLQDLRNEIQEVKLEEGNAGKFRRARFLRYSDETILSLIHLFIGYCTYLCKRNKLGTLVHNIDIEAPQEECYSNRERGTTVNIKYSRRCCIGTTALYLLLLTGIIIYTQTTQAQVVWRLPPLVVPVEESEIIFWDCWAPEEPACQDFLGAMIYLKASTNISIQEGPTLGNWAREIWGTLFKKATRQCRRGRIWRRWNETITGPSGCANNTCYNISVIVPDYQCYLDRVDTWLQGKVNISLCLTGGKMLYNKDTKQLSYCTDPLQIPLINYTFGPNQTCMWNTSQIQDSDIPKCGWWNQIAYYNSCRWEQTDVKFHCQRTQSQPGTWLRTISSWKQKNRWEWRPDFESEKVRVSLQCNTTKNLTFAMRSSGDYGEVTGAWIEFGCHRNKSKLHSDARFRIRCRWNVGDNTSLIDTCGNDPNVSGANPVDCTMYANRMYNCSLQNGFTMKVDDLIMHFNMTKAVEMYNIAGNWSCTSDLPSTWGYMNCNCTNSSSTDSNKMACPKRQGILRNWYNPVAGLRQSLEKYQVVKQPDYLVVPREVMEYKPRRKRAAIHVMLALATVLSMAGAGTGATAIGMVTQYHQVLATHQETIEKITEALKVNNLRLVTLEHQVLVIGLKVEAIEKFLYTAFAMQELGCNQNQFFCKVPPELWQRYNMTINQTIWNHGNITLGEWYNQTKDLQQKFYEIIMDMEQNNVQGRKGLQQLQEWEDWVGWLGNIPRYLKGLLGGILGIGLGVLLLILCLPTLVDCIRNCISKVLGYTVIAMPEVEEEEIQPPMELRRNGRQCDMSEKEEE</sequence>
<accession>Q04993</accession>
<evidence type="ECO:0000250" key="1"/>
<evidence type="ECO:0000255" key="2"/>
<evidence type="ECO:0000256" key="3">
    <source>
        <dbReference type="SAM" id="MobiDB-lite"/>
    </source>
</evidence>
<organismHost>
    <name type="scientific">Felidae</name>
    <name type="common">cat family</name>
    <dbReference type="NCBI Taxonomy" id="9681"/>
</organismHost>
<keyword id="KW-0165">Cleavage on pair of basic residues</keyword>
<keyword id="KW-0175">Coiled coil</keyword>
<keyword id="KW-1015">Disulfide bond</keyword>
<keyword id="KW-0325">Glycoprotein</keyword>
<keyword id="KW-1032">Host cell membrane</keyword>
<keyword id="KW-1043">Host membrane</keyword>
<keyword id="KW-0945">Host-virus interaction</keyword>
<keyword id="KW-0472">Membrane</keyword>
<keyword id="KW-0812">Transmembrane</keyword>
<keyword id="KW-1133">Transmembrane helix</keyword>
<keyword id="KW-1161">Viral attachment to host cell</keyword>
<keyword id="KW-0261">Viral envelope protein</keyword>
<keyword id="KW-0946">Virion</keyword>
<keyword id="KW-1160">Virus entry into host cell</keyword>
<protein>
    <recommendedName>
        <fullName>Envelope glycoprotein gp150</fullName>
    </recommendedName>
    <alternativeName>
        <fullName>Env polyprotein</fullName>
    </alternativeName>
    <component>
        <recommendedName>
            <fullName>Surface protein</fullName>
            <shortName>SU</shortName>
        </recommendedName>
        <alternativeName>
            <fullName>Glycoprotein 100</fullName>
            <shortName>gp100</shortName>
        </alternativeName>
    </component>
    <component>
        <recommendedName>
            <fullName>Transmembrane protein</fullName>
            <shortName>TM</shortName>
        </recommendedName>
        <alternativeName>
            <fullName>Glycoprotein 36</fullName>
            <shortName>gp36</shortName>
        </alternativeName>
    </component>
</protein>
<feature type="chain" id="PRO_0000239536" description="Envelope glycoprotein gp150">
    <location>
        <begin position="1"/>
        <end position="855"/>
    </location>
</feature>
<feature type="chain" id="PRO_0000038725" description="Surface protein" evidence="1">
    <location>
        <begin position="1"/>
        <end position="610"/>
    </location>
</feature>
<feature type="chain" id="PRO_0000038726" description="Transmembrane protein" evidence="1">
    <location>
        <begin position="611"/>
        <end position="855"/>
    </location>
</feature>
<feature type="topological domain" description="Extracellular" evidence="2">
    <location>
        <begin position="1"/>
        <end position="784"/>
    </location>
</feature>
<feature type="transmembrane region" description="Helical" evidence="2">
    <location>
        <begin position="785"/>
        <end position="805"/>
    </location>
</feature>
<feature type="topological domain" description="Cytoplasmic" evidence="2">
    <location>
        <begin position="806"/>
        <end position="855"/>
    </location>
</feature>
<feature type="region of interest" description="Fusion peptide" evidence="2">
    <location>
        <begin position="615"/>
        <end position="635"/>
    </location>
</feature>
<feature type="region of interest" description="Immunosuppression" evidence="1">
    <location>
        <begin position="661"/>
        <end position="679"/>
    </location>
</feature>
<feature type="region of interest" description="Disordered" evidence="3">
    <location>
        <begin position="835"/>
        <end position="855"/>
    </location>
</feature>
<feature type="coiled-coil region" evidence="2">
    <location>
        <begin position="642"/>
        <end position="692"/>
    </location>
</feature>
<feature type="coiled-coil region" evidence="2">
    <location>
        <begin position="735"/>
        <end position="771"/>
    </location>
</feature>
<feature type="site" description="Cleavage; by host" evidence="1">
    <location>
        <begin position="610"/>
        <end position="611"/>
    </location>
</feature>
<feature type="glycosylation site" description="N-linked (GlcNAc...) asparagine; by host" evidence="2">
    <location>
        <position position="220"/>
    </location>
</feature>
<feature type="glycosylation site" description="N-linked (GlcNAc...) asparagine; by host" evidence="2">
    <location>
        <position position="258"/>
    </location>
</feature>
<feature type="glycosylation site" description="N-linked (GlcNAc...) asparagine; by host" evidence="2">
    <location>
        <position position="269"/>
    </location>
</feature>
<feature type="glycosylation site" description="N-linked (GlcNAc...) asparagine; by host" evidence="2">
    <location>
        <position position="274"/>
    </location>
</feature>
<feature type="glycosylation site" description="N-linked (GlcNAc...) asparagine; by host" evidence="2">
    <location>
        <position position="298"/>
    </location>
</feature>
<feature type="glycosylation site" description="N-linked (GlcNAc...) asparagine; by host" evidence="2">
    <location>
        <position position="330"/>
    </location>
</feature>
<feature type="glycosylation site" description="N-linked (GlcNAc...) asparagine; by host" evidence="2">
    <location>
        <position position="336"/>
    </location>
</feature>
<feature type="glycosylation site" description="N-linked (GlcNAc...) asparagine; by host" evidence="2">
    <location>
        <position position="342"/>
    </location>
</feature>
<feature type="glycosylation site" description="N-linked (GlcNAc...) asparagine; by host" evidence="2">
    <location>
        <position position="418"/>
    </location>
</feature>
<feature type="glycosylation site" description="N-linked (GlcNAc...) asparagine; by host" evidence="2">
    <location>
        <position position="422"/>
    </location>
</feature>
<feature type="glycosylation site" description="N-linked (GlcNAc...) asparagine; by host" evidence="2">
    <location>
        <position position="448"/>
    </location>
</feature>
<feature type="glycosylation site" description="N-linked (GlcNAc...) asparagine; by host" evidence="2">
    <location>
        <position position="469"/>
    </location>
</feature>
<feature type="glycosylation site" description="N-linked (GlcNAc...) asparagine; by host" evidence="2">
    <location>
        <position position="481"/>
    </location>
</feature>
<feature type="glycosylation site" description="N-linked (GlcNAc...) asparagine; by host" evidence="2">
    <location>
        <position position="499"/>
    </location>
</feature>
<feature type="glycosylation site" description="N-linked (GlcNAc...) asparagine; by host" evidence="2">
    <location>
        <position position="518"/>
    </location>
</feature>
<feature type="glycosylation site" description="N-linked (GlcNAc...) asparagine; by host" evidence="2">
    <location>
        <position position="531"/>
    </location>
</feature>
<feature type="glycosylation site" description="N-linked (GlcNAc...) asparagine; by host" evidence="2">
    <location>
        <position position="548"/>
    </location>
</feature>
<feature type="glycosylation site" description="N-linked (GlcNAc...) asparagine; by host" evidence="2">
    <location>
        <position position="716"/>
    </location>
</feature>
<feature type="glycosylation site" description="N-linked (GlcNAc...) asparagine; by host" evidence="2">
    <location>
        <position position="720"/>
    </location>
</feature>
<feature type="glycosylation site" description="N-linked (GlcNAc...) asparagine; by host" evidence="2">
    <location>
        <position position="736"/>
    </location>
</feature>